<organism>
    <name type="scientific">Parvibaculum lavamentivorans (strain DS-1 / DSM 13023 / NCIMB 13966)</name>
    <dbReference type="NCBI Taxonomy" id="402881"/>
    <lineage>
        <taxon>Bacteria</taxon>
        <taxon>Pseudomonadati</taxon>
        <taxon>Pseudomonadota</taxon>
        <taxon>Alphaproteobacteria</taxon>
        <taxon>Hyphomicrobiales</taxon>
        <taxon>Parvibaculaceae</taxon>
        <taxon>Parvibaculum</taxon>
    </lineage>
</organism>
<name>COXX_PARL1</name>
<evidence type="ECO:0000255" key="1">
    <source>
        <dbReference type="HAMAP-Rule" id="MF_00154"/>
    </source>
</evidence>
<keyword id="KW-0997">Cell inner membrane</keyword>
<keyword id="KW-1003">Cell membrane</keyword>
<keyword id="KW-0350">Heme biosynthesis</keyword>
<keyword id="KW-0472">Membrane</keyword>
<keyword id="KW-1185">Reference proteome</keyword>
<keyword id="KW-0808">Transferase</keyword>
<keyword id="KW-0812">Transmembrane</keyword>
<keyword id="KW-1133">Transmembrane helix</keyword>
<proteinExistence type="inferred from homology"/>
<reference key="1">
    <citation type="journal article" date="2011" name="Stand. Genomic Sci.">
        <title>Complete genome sequence of Parvibaculum lavamentivorans type strain (DS-1(T)).</title>
        <authorList>
            <person name="Schleheck D."/>
            <person name="Weiss M."/>
            <person name="Pitluck S."/>
            <person name="Bruce D."/>
            <person name="Land M.L."/>
            <person name="Han S."/>
            <person name="Saunders E."/>
            <person name="Tapia R."/>
            <person name="Detter C."/>
            <person name="Brettin T."/>
            <person name="Han J."/>
            <person name="Woyke T."/>
            <person name="Goodwin L."/>
            <person name="Pennacchio L."/>
            <person name="Nolan M."/>
            <person name="Cook A.M."/>
            <person name="Kjelleberg S."/>
            <person name="Thomas T."/>
        </authorList>
    </citation>
    <scope>NUCLEOTIDE SEQUENCE [LARGE SCALE GENOMIC DNA]</scope>
    <source>
        <strain>DS-1 / DSM 13023 / NCIMB 13966</strain>
    </source>
</reference>
<sequence>MSDTAISNQRDTAAFPEGGMGSARDFFELLKPRVMSLVIFTALVGIAVAPGGIHPVIAFTALLCIAVGAGASGALNMWYDADIDARMARTANRPIPAGRVTAREAAVFGSILSVFAVMTMGVLVNWVAAALLAFTIFFYLVVYTMWLKRRTPQNIVIGGAAGAFPPMIGWAAVTGSVSIEPFVLFLIIFMWTPPHFWALALYRSGDYEKVGVPMLPVVSGEKETRRQIMLYSLALVPVTLLPGFLGFAGALYMGATAALGAGFLWLAFGIWRTEPGAAQDKAAKRLFGYSILYLFLIFSLLLVEKMLGLGGTAFALAL</sequence>
<comment type="function">
    <text evidence="1">Converts heme B (protoheme IX) to heme O by substitution of the vinyl group on carbon 2 of heme B porphyrin ring with a hydroxyethyl farnesyl side group.</text>
</comment>
<comment type="catalytic activity">
    <reaction evidence="1">
        <text>heme b + (2E,6E)-farnesyl diphosphate + H2O = Fe(II)-heme o + diphosphate</text>
        <dbReference type="Rhea" id="RHEA:28070"/>
        <dbReference type="ChEBI" id="CHEBI:15377"/>
        <dbReference type="ChEBI" id="CHEBI:33019"/>
        <dbReference type="ChEBI" id="CHEBI:60344"/>
        <dbReference type="ChEBI" id="CHEBI:60530"/>
        <dbReference type="ChEBI" id="CHEBI:175763"/>
        <dbReference type="EC" id="2.5.1.141"/>
    </reaction>
</comment>
<comment type="pathway">
    <text evidence="1">Porphyrin-containing compound metabolism; heme O biosynthesis; heme O from protoheme: step 1/1.</text>
</comment>
<comment type="subcellular location">
    <subcellularLocation>
        <location evidence="1">Cell inner membrane</location>
        <topology evidence="1">Multi-pass membrane protein</topology>
    </subcellularLocation>
</comment>
<comment type="miscellaneous">
    <text evidence="1">Carbon 2 of the heme B porphyrin ring is defined according to the Fischer nomenclature.</text>
</comment>
<comment type="similarity">
    <text evidence="1">Belongs to the UbiA prenyltransferase family. Protoheme IX farnesyltransferase subfamily.</text>
</comment>
<feature type="chain" id="PRO_0000346064" description="Protoheme IX farnesyltransferase">
    <location>
        <begin position="1"/>
        <end position="318"/>
    </location>
</feature>
<feature type="transmembrane region" description="Helical" evidence="1">
    <location>
        <begin position="37"/>
        <end position="57"/>
    </location>
</feature>
<feature type="transmembrane region" description="Helical" evidence="1">
    <location>
        <begin position="58"/>
        <end position="78"/>
    </location>
</feature>
<feature type="transmembrane region" description="Helical" evidence="1">
    <location>
        <begin position="100"/>
        <end position="120"/>
    </location>
</feature>
<feature type="transmembrane region" description="Helical" evidence="1">
    <location>
        <begin position="122"/>
        <end position="142"/>
    </location>
</feature>
<feature type="transmembrane region" description="Helical" evidence="1">
    <location>
        <begin position="155"/>
        <end position="175"/>
    </location>
</feature>
<feature type="transmembrane region" description="Helical" evidence="1">
    <location>
        <begin position="182"/>
        <end position="202"/>
    </location>
</feature>
<feature type="transmembrane region" description="Helical" evidence="1">
    <location>
        <begin position="228"/>
        <end position="248"/>
    </location>
</feature>
<feature type="transmembrane region" description="Helical" evidence="1">
    <location>
        <begin position="251"/>
        <end position="271"/>
    </location>
</feature>
<feature type="transmembrane region" description="Helical" evidence="1">
    <location>
        <begin position="291"/>
        <end position="311"/>
    </location>
</feature>
<dbReference type="EC" id="2.5.1.141" evidence="1"/>
<dbReference type="EMBL" id="CP000774">
    <property type="protein sequence ID" value="ABS62294.1"/>
    <property type="molecule type" value="Genomic_DNA"/>
</dbReference>
<dbReference type="RefSeq" id="WP_011995585.1">
    <property type="nucleotide sequence ID" value="NC_009719.1"/>
</dbReference>
<dbReference type="SMR" id="A7HQW1"/>
<dbReference type="STRING" id="402881.Plav_0671"/>
<dbReference type="KEGG" id="pla:Plav_0671"/>
<dbReference type="eggNOG" id="COG0109">
    <property type="taxonomic scope" value="Bacteria"/>
</dbReference>
<dbReference type="HOGENOM" id="CLU_029631_0_2_5"/>
<dbReference type="OrthoDB" id="9814417at2"/>
<dbReference type="UniPathway" id="UPA00834">
    <property type="reaction ID" value="UER00712"/>
</dbReference>
<dbReference type="Proteomes" id="UP000006377">
    <property type="component" value="Chromosome"/>
</dbReference>
<dbReference type="GO" id="GO:0005886">
    <property type="term" value="C:plasma membrane"/>
    <property type="evidence" value="ECO:0007669"/>
    <property type="project" value="UniProtKB-SubCell"/>
</dbReference>
<dbReference type="GO" id="GO:0008495">
    <property type="term" value="F:protoheme IX farnesyltransferase activity"/>
    <property type="evidence" value="ECO:0007669"/>
    <property type="project" value="UniProtKB-UniRule"/>
</dbReference>
<dbReference type="GO" id="GO:0048034">
    <property type="term" value="P:heme O biosynthetic process"/>
    <property type="evidence" value="ECO:0007669"/>
    <property type="project" value="UniProtKB-UniRule"/>
</dbReference>
<dbReference type="CDD" id="cd13957">
    <property type="entry name" value="PT_UbiA_Cox10"/>
    <property type="match status" value="1"/>
</dbReference>
<dbReference type="Gene3D" id="1.10.357.140">
    <property type="entry name" value="UbiA prenyltransferase"/>
    <property type="match status" value="1"/>
</dbReference>
<dbReference type="HAMAP" id="MF_00154">
    <property type="entry name" value="CyoE_CtaB"/>
    <property type="match status" value="1"/>
</dbReference>
<dbReference type="InterPro" id="IPR006369">
    <property type="entry name" value="Protohaem_IX_farnesylTrfase"/>
</dbReference>
<dbReference type="InterPro" id="IPR000537">
    <property type="entry name" value="UbiA_prenyltransferase"/>
</dbReference>
<dbReference type="InterPro" id="IPR030470">
    <property type="entry name" value="UbiA_prenylTrfase_CS"/>
</dbReference>
<dbReference type="InterPro" id="IPR044878">
    <property type="entry name" value="UbiA_sf"/>
</dbReference>
<dbReference type="NCBIfam" id="TIGR01473">
    <property type="entry name" value="cyoE_ctaB"/>
    <property type="match status" value="1"/>
</dbReference>
<dbReference type="NCBIfam" id="NF003349">
    <property type="entry name" value="PRK04375.1-2"/>
    <property type="match status" value="1"/>
</dbReference>
<dbReference type="PANTHER" id="PTHR43448:SF7">
    <property type="entry name" value="4-HYDROXYBENZOATE SOLANESYLTRANSFERASE"/>
    <property type="match status" value="1"/>
</dbReference>
<dbReference type="PANTHER" id="PTHR43448">
    <property type="entry name" value="PROTOHEME IX FARNESYLTRANSFERASE, MITOCHONDRIAL"/>
    <property type="match status" value="1"/>
</dbReference>
<dbReference type="Pfam" id="PF01040">
    <property type="entry name" value="UbiA"/>
    <property type="match status" value="1"/>
</dbReference>
<dbReference type="PROSITE" id="PS00943">
    <property type="entry name" value="UBIA"/>
    <property type="match status" value="1"/>
</dbReference>
<accession>A7HQW1</accession>
<gene>
    <name evidence="1" type="primary">ctaB</name>
    <name type="ordered locus">Plav_0671</name>
</gene>
<protein>
    <recommendedName>
        <fullName evidence="1">Protoheme IX farnesyltransferase</fullName>
        <ecNumber evidence="1">2.5.1.141</ecNumber>
    </recommendedName>
    <alternativeName>
        <fullName evidence="1">Heme B farnesyltransferase</fullName>
    </alternativeName>
    <alternativeName>
        <fullName evidence="1">Heme O synthase</fullName>
    </alternativeName>
</protein>